<keyword id="KW-0963">Cytoplasm</keyword>
<keyword id="KW-0369">Histidine metabolism</keyword>
<keyword id="KW-0378">Hydrolase</keyword>
<keyword id="KW-0408">Iron</keyword>
<keyword id="KW-0479">Metal-binding</keyword>
<keyword id="KW-1185">Reference proteome</keyword>
<keyword id="KW-0862">Zinc</keyword>
<reference key="1">
    <citation type="submission" date="2006-12" db="EMBL/GenBank/DDBJ databases">
        <title>Complete sequence of chromosome 1 of Verminephrobacter eiseniae EF01-2.</title>
        <authorList>
            <person name="Copeland A."/>
            <person name="Lucas S."/>
            <person name="Lapidus A."/>
            <person name="Barry K."/>
            <person name="Detter J.C."/>
            <person name="Glavina del Rio T."/>
            <person name="Dalin E."/>
            <person name="Tice H."/>
            <person name="Pitluck S."/>
            <person name="Chertkov O."/>
            <person name="Brettin T."/>
            <person name="Bruce D."/>
            <person name="Han C."/>
            <person name="Tapia R."/>
            <person name="Gilna P."/>
            <person name="Schmutz J."/>
            <person name="Larimer F."/>
            <person name="Land M."/>
            <person name="Hauser L."/>
            <person name="Kyrpides N."/>
            <person name="Kim E."/>
            <person name="Stahl D."/>
            <person name="Richardson P."/>
        </authorList>
    </citation>
    <scope>NUCLEOTIDE SEQUENCE [LARGE SCALE GENOMIC DNA]</scope>
    <source>
        <strain>EF01-2</strain>
    </source>
</reference>
<dbReference type="EC" id="3.5.2.7" evidence="1"/>
<dbReference type="EMBL" id="CP000542">
    <property type="protein sequence ID" value="ABM59364.1"/>
    <property type="molecule type" value="Genomic_DNA"/>
</dbReference>
<dbReference type="RefSeq" id="WP_011811355.1">
    <property type="nucleotide sequence ID" value="NC_008786.1"/>
</dbReference>
<dbReference type="SMR" id="A1WP07"/>
<dbReference type="STRING" id="391735.Veis_3648"/>
<dbReference type="GeneID" id="76462044"/>
<dbReference type="KEGG" id="vei:Veis_3648"/>
<dbReference type="eggNOG" id="COG1228">
    <property type="taxonomic scope" value="Bacteria"/>
</dbReference>
<dbReference type="HOGENOM" id="CLU_041647_0_0_4"/>
<dbReference type="OrthoDB" id="9776455at2"/>
<dbReference type="UniPathway" id="UPA00379">
    <property type="reaction ID" value="UER00551"/>
</dbReference>
<dbReference type="Proteomes" id="UP000000374">
    <property type="component" value="Chromosome"/>
</dbReference>
<dbReference type="GO" id="GO:0005737">
    <property type="term" value="C:cytoplasm"/>
    <property type="evidence" value="ECO:0007669"/>
    <property type="project" value="UniProtKB-SubCell"/>
</dbReference>
<dbReference type="GO" id="GO:0050480">
    <property type="term" value="F:imidazolonepropionase activity"/>
    <property type="evidence" value="ECO:0007669"/>
    <property type="project" value="UniProtKB-UniRule"/>
</dbReference>
<dbReference type="GO" id="GO:0005506">
    <property type="term" value="F:iron ion binding"/>
    <property type="evidence" value="ECO:0007669"/>
    <property type="project" value="UniProtKB-UniRule"/>
</dbReference>
<dbReference type="GO" id="GO:0008270">
    <property type="term" value="F:zinc ion binding"/>
    <property type="evidence" value="ECO:0007669"/>
    <property type="project" value="UniProtKB-UniRule"/>
</dbReference>
<dbReference type="GO" id="GO:0019556">
    <property type="term" value="P:L-histidine catabolic process to glutamate and formamide"/>
    <property type="evidence" value="ECO:0007669"/>
    <property type="project" value="UniProtKB-UniPathway"/>
</dbReference>
<dbReference type="GO" id="GO:0019557">
    <property type="term" value="P:L-histidine catabolic process to glutamate and formate"/>
    <property type="evidence" value="ECO:0007669"/>
    <property type="project" value="UniProtKB-UniPathway"/>
</dbReference>
<dbReference type="FunFam" id="3.20.20.140:FF:000007">
    <property type="entry name" value="Imidazolonepropionase"/>
    <property type="match status" value="1"/>
</dbReference>
<dbReference type="Gene3D" id="3.20.20.140">
    <property type="entry name" value="Metal-dependent hydrolases"/>
    <property type="match status" value="1"/>
</dbReference>
<dbReference type="Gene3D" id="2.30.40.10">
    <property type="entry name" value="Urease, subunit C, domain 1"/>
    <property type="match status" value="1"/>
</dbReference>
<dbReference type="HAMAP" id="MF_00372">
    <property type="entry name" value="HutI"/>
    <property type="match status" value="1"/>
</dbReference>
<dbReference type="InterPro" id="IPR006680">
    <property type="entry name" value="Amidohydro-rel"/>
</dbReference>
<dbReference type="InterPro" id="IPR005920">
    <property type="entry name" value="HutI"/>
</dbReference>
<dbReference type="InterPro" id="IPR011059">
    <property type="entry name" value="Metal-dep_hydrolase_composite"/>
</dbReference>
<dbReference type="InterPro" id="IPR032466">
    <property type="entry name" value="Metal_Hydrolase"/>
</dbReference>
<dbReference type="NCBIfam" id="TIGR01224">
    <property type="entry name" value="hutI"/>
    <property type="match status" value="1"/>
</dbReference>
<dbReference type="PANTHER" id="PTHR42752">
    <property type="entry name" value="IMIDAZOLONEPROPIONASE"/>
    <property type="match status" value="1"/>
</dbReference>
<dbReference type="PANTHER" id="PTHR42752:SF1">
    <property type="entry name" value="IMIDAZOLONEPROPIONASE-RELATED"/>
    <property type="match status" value="1"/>
</dbReference>
<dbReference type="Pfam" id="PF01979">
    <property type="entry name" value="Amidohydro_1"/>
    <property type="match status" value="1"/>
</dbReference>
<dbReference type="SUPFAM" id="SSF51338">
    <property type="entry name" value="Composite domain of metallo-dependent hydrolases"/>
    <property type="match status" value="1"/>
</dbReference>
<dbReference type="SUPFAM" id="SSF51556">
    <property type="entry name" value="Metallo-dependent hydrolases"/>
    <property type="match status" value="1"/>
</dbReference>
<name>HUTI_VEREI</name>
<proteinExistence type="inferred from homology"/>
<organism>
    <name type="scientific">Verminephrobacter eiseniae (strain EF01-2)</name>
    <dbReference type="NCBI Taxonomy" id="391735"/>
    <lineage>
        <taxon>Bacteria</taxon>
        <taxon>Pseudomonadati</taxon>
        <taxon>Pseudomonadota</taxon>
        <taxon>Betaproteobacteria</taxon>
        <taxon>Burkholderiales</taxon>
        <taxon>Comamonadaceae</taxon>
        <taxon>Verminephrobacter</taxon>
    </lineage>
</organism>
<protein>
    <recommendedName>
        <fullName evidence="1">Imidazolonepropionase</fullName>
        <ecNumber evidence="1">3.5.2.7</ecNumber>
    </recommendedName>
    <alternativeName>
        <fullName evidence="1">Imidazolone-5-propionate hydrolase</fullName>
    </alternativeName>
</protein>
<feature type="chain" id="PRO_0000306534" description="Imidazolonepropionase">
    <location>
        <begin position="1"/>
        <end position="456"/>
    </location>
</feature>
<feature type="binding site" evidence="1">
    <location>
        <position position="104"/>
    </location>
    <ligand>
        <name>Fe(3+)</name>
        <dbReference type="ChEBI" id="CHEBI:29034"/>
    </ligand>
</feature>
<feature type="binding site" evidence="1">
    <location>
        <position position="104"/>
    </location>
    <ligand>
        <name>Zn(2+)</name>
        <dbReference type="ChEBI" id="CHEBI:29105"/>
    </ligand>
</feature>
<feature type="binding site" evidence="1">
    <location>
        <position position="106"/>
    </location>
    <ligand>
        <name>Fe(3+)</name>
        <dbReference type="ChEBI" id="CHEBI:29034"/>
    </ligand>
</feature>
<feature type="binding site" evidence="1">
    <location>
        <position position="106"/>
    </location>
    <ligand>
        <name>Zn(2+)</name>
        <dbReference type="ChEBI" id="CHEBI:29105"/>
    </ligand>
</feature>
<feature type="binding site" evidence="1">
    <location>
        <position position="113"/>
    </location>
    <ligand>
        <name>4-imidazolone-5-propanoate</name>
        <dbReference type="ChEBI" id="CHEBI:77893"/>
    </ligand>
</feature>
<feature type="binding site" evidence="1">
    <location>
        <position position="176"/>
    </location>
    <ligand>
        <name>4-imidazolone-5-propanoate</name>
        <dbReference type="ChEBI" id="CHEBI:77893"/>
    </ligand>
</feature>
<feature type="binding site" evidence="1">
    <location>
        <position position="176"/>
    </location>
    <ligand>
        <name>N-formimidoyl-L-glutamate</name>
        <dbReference type="ChEBI" id="CHEBI:58928"/>
    </ligand>
</feature>
<feature type="binding site" evidence="1">
    <location>
        <position position="209"/>
    </location>
    <ligand>
        <name>4-imidazolone-5-propanoate</name>
        <dbReference type="ChEBI" id="CHEBI:77893"/>
    </ligand>
</feature>
<feature type="binding site" evidence="1">
    <location>
        <position position="274"/>
    </location>
    <ligand>
        <name>Fe(3+)</name>
        <dbReference type="ChEBI" id="CHEBI:29034"/>
    </ligand>
</feature>
<feature type="binding site" evidence="1">
    <location>
        <position position="274"/>
    </location>
    <ligand>
        <name>Zn(2+)</name>
        <dbReference type="ChEBI" id="CHEBI:29105"/>
    </ligand>
</feature>
<feature type="binding site" evidence="1">
    <location>
        <position position="277"/>
    </location>
    <ligand>
        <name>4-imidazolone-5-propanoate</name>
        <dbReference type="ChEBI" id="CHEBI:77893"/>
    </ligand>
</feature>
<feature type="binding site" evidence="1">
    <location>
        <position position="349"/>
    </location>
    <ligand>
        <name>Fe(3+)</name>
        <dbReference type="ChEBI" id="CHEBI:29034"/>
    </ligand>
</feature>
<feature type="binding site" evidence="1">
    <location>
        <position position="349"/>
    </location>
    <ligand>
        <name>Zn(2+)</name>
        <dbReference type="ChEBI" id="CHEBI:29105"/>
    </ligand>
</feature>
<feature type="binding site" evidence="1">
    <location>
        <position position="351"/>
    </location>
    <ligand>
        <name>N-formimidoyl-L-glutamate</name>
        <dbReference type="ChEBI" id="CHEBI:58928"/>
    </ligand>
</feature>
<feature type="binding site" evidence="1">
    <location>
        <position position="353"/>
    </location>
    <ligand>
        <name>N-formimidoyl-L-glutamate</name>
        <dbReference type="ChEBI" id="CHEBI:58928"/>
    </ligand>
</feature>
<feature type="binding site" evidence="1">
    <location>
        <position position="354"/>
    </location>
    <ligand>
        <name>4-imidazolone-5-propanoate</name>
        <dbReference type="ChEBI" id="CHEBI:77893"/>
    </ligand>
</feature>
<comment type="function">
    <text evidence="1">Catalyzes the hydrolytic cleavage of the carbon-nitrogen bond in imidazolone-5-propanoate to yield N-formimidoyl-L-glutamate. It is the third step in the universal histidine degradation pathway.</text>
</comment>
<comment type="catalytic activity">
    <reaction evidence="1">
        <text>4-imidazolone-5-propanoate + H2O = N-formimidoyl-L-glutamate</text>
        <dbReference type="Rhea" id="RHEA:23660"/>
        <dbReference type="ChEBI" id="CHEBI:15377"/>
        <dbReference type="ChEBI" id="CHEBI:58928"/>
        <dbReference type="ChEBI" id="CHEBI:77893"/>
        <dbReference type="EC" id="3.5.2.7"/>
    </reaction>
</comment>
<comment type="cofactor">
    <cofactor evidence="1">
        <name>Zn(2+)</name>
        <dbReference type="ChEBI" id="CHEBI:29105"/>
    </cofactor>
    <cofactor evidence="1">
        <name>Fe(3+)</name>
        <dbReference type="ChEBI" id="CHEBI:29034"/>
    </cofactor>
    <text evidence="1">Binds 1 zinc or iron ion per subunit.</text>
</comment>
<comment type="pathway">
    <text evidence="1">Amino-acid degradation; L-histidine degradation into L-glutamate; N-formimidoyl-L-glutamate from L-histidine: step 3/3.</text>
</comment>
<comment type="subcellular location">
    <subcellularLocation>
        <location evidence="1">Cytoplasm</location>
    </subcellularLocation>
</comment>
<comment type="similarity">
    <text evidence="1">Belongs to the metallo-dependent hydrolases superfamily. HutI family.</text>
</comment>
<sequence length="456" mass="47812">MTMHDTPSGLNWDLGLAPPADGLWCGLRLVAELTQADQPLPADAPACLVVQGGMLRWVGPQAQLPAAFSALRRFDARDAARTGAHGAAPGAPGTLATPALVDCHTHLVYGGQRADEFALRLAGASYEALAQAGGGILASVQATRAASEDQLFALAMPRLQALLAEGVGAIEIKSGYGLALEHERKQLRVARRLGQACAVTVRTSFLGAHALPPEYAGRSQDYIDLVCQQMLPALAEQGLVDAVDMFCERIAFTLAETEQVFLAAQQLGLPVKLHAGQLSDMGGAALAARYGALSCDHLEHLSADAIAAMQAAGTVAVLLPGAWYTLRGQQRPPIEALRAAGVPMAVATDHNPGSSPALSLLLMAHMACTLFHLSLSEALAGITTHAARALGLQDSHGLIAAGRPANFVLWPLQEAAELVYWLGHKPACTIVRQGRVVRDGLGLLDRPEMPVLRDGA</sequence>
<evidence type="ECO:0000255" key="1">
    <source>
        <dbReference type="HAMAP-Rule" id="MF_00372"/>
    </source>
</evidence>
<accession>A1WP07</accession>
<gene>
    <name evidence="1" type="primary">hutI</name>
    <name type="ordered locus">Veis_3648</name>
</gene>